<comment type="function">
    <text evidence="1">Catalyzes the aldol condensation of dihydroxyacetone phosphate (DHAP or glycerone-phosphate) with glyceraldehyde 3-phosphate (G3P) to form fructose 1,6-bisphosphate (FBP) in gluconeogenesis and the reverse reaction in glycolysis.</text>
</comment>
<comment type="catalytic activity">
    <reaction>
        <text>beta-D-fructose 1,6-bisphosphate = D-glyceraldehyde 3-phosphate + dihydroxyacetone phosphate</text>
        <dbReference type="Rhea" id="RHEA:14729"/>
        <dbReference type="ChEBI" id="CHEBI:32966"/>
        <dbReference type="ChEBI" id="CHEBI:57642"/>
        <dbReference type="ChEBI" id="CHEBI:59776"/>
        <dbReference type="EC" id="4.1.2.13"/>
    </reaction>
</comment>
<comment type="cofactor">
    <cofactor evidence="1">
        <name>Zn(2+)</name>
        <dbReference type="ChEBI" id="CHEBI:29105"/>
    </cofactor>
    <text evidence="1">Binds 2 Zn(2+) ions per subunit. One is catalytic and the other provides a structural contribution.</text>
</comment>
<comment type="pathway">
    <text>Carbohydrate degradation; glycolysis; D-glyceraldehyde 3-phosphate and glycerone phosphate from D-glucose: step 4/4.</text>
</comment>
<comment type="similarity">
    <text evidence="2">Belongs to the class II fructose-bisphosphate aldolase family.</text>
</comment>
<feature type="initiator methionine" description="Removed" evidence="1">
    <location>
        <position position="1"/>
    </location>
</feature>
<feature type="chain" id="PRO_0000411267" description="Fructose-bisphosphate aldolase">
    <location>
        <begin position="2"/>
        <end position="293"/>
    </location>
</feature>
<feature type="active site" description="Proton donor" evidence="1">
    <location>
        <position position="85"/>
    </location>
</feature>
<feature type="binding site" evidence="1">
    <location>
        <position position="50"/>
    </location>
    <ligand>
        <name>D-glyceraldehyde 3-phosphate</name>
        <dbReference type="ChEBI" id="CHEBI:59776"/>
    </ligand>
</feature>
<feature type="binding site" evidence="1">
    <location>
        <position position="86"/>
    </location>
    <ligand>
        <name>Zn(2+)</name>
        <dbReference type="ChEBI" id="CHEBI:29105"/>
        <label>1</label>
        <note>catalytic</note>
    </ligand>
</feature>
<feature type="binding site" evidence="1">
    <location>
        <position position="106"/>
    </location>
    <ligand>
        <name>Zn(2+)</name>
        <dbReference type="ChEBI" id="CHEBI:29105"/>
        <label>2</label>
    </ligand>
</feature>
<feature type="binding site" evidence="1">
    <location>
        <position position="136"/>
    </location>
    <ligand>
        <name>Zn(2+)</name>
        <dbReference type="ChEBI" id="CHEBI:29105"/>
        <label>2</label>
    </ligand>
</feature>
<feature type="binding site" evidence="1">
    <location>
        <position position="178"/>
    </location>
    <ligand>
        <name>Zn(2+)</name>
        <dbReference type="ChEBI" id="CHEBI:29105"/>
        <label>1</label>
        <note>catalytic</note>
    </ligand>
</feature>
<feature type="binding site" evidence="1">
    <location>
        <position position="179"/>
    </location>
    <ligand>
        <name>dihydroxyacetone phosphate</name>
        <dbReference type="ChEBI" id="CHEBI:57642"/>
    </ligand>
</feature>
<feature type="binding site" evidence="1">
    <location>
        <position position="208"/>
    </location>
    <ligand>
        <name>Zn(2+)</name>
        <dbReference type="ChEBI" id="CHEBI:29105"/>
        <label>1</label>
        <note>catalytic</note>
    </ligand>
</feature>
<feature type="binding site" evidence="1">
    <location>
        <begin position="209"/>
        <end position="211"/>
    </location>
    <ligand>
        <name>dihydroxyacetone phosphate</name>
        <dbReference type="ChEBI" id="CHEBI:57642"/>
    </ligand>
</feature>
<feature type="binding site" evidence="1">
    <location>
        <begin position="230"/>
        <end position="233"/>
    </location>
    <ligand>
        <name>dihydroxyacetone phosphate</name>
        <dbReference type="ChEBI" id="CHEBI:57642"/>
    </ligand>
</feature>
<accession>P0CZ59</accession>
<accession>Q8K5W5</accession>
<name>ALF_STRPQ</name>
<sequence length="293" mass="31207">MAIVSAEKFVQAARKNGYAVGGFNTNNLEWTQAILRAAEAKQAPVLIQTSMGAAKYMGGYKVCQSLITNLVESMGITVPVAIHLDHGHYEDALECIEVGYTSIMFDGSHLPVEENLAKTAEVVKIAHAKGVSVEAEVGTIGGEEDGIIGKGELAPIEDAKAMVETGIDFLAAGIGNIHGPYPENWEGLALDHLEKLTAAVPGFPIVLHGGSGIPDDQIKEAIRLGVAKVNVNTESQIAFSNATREFARNYEANEAEYDGKKLFDPRKFLAPGMKAVQGAVEERIDVFGSANKA</sequence>
<dbReference type="EC" id="4.1.2.13"/>
<dbReference type="EMBL" id="BA000034">
    <property type="protein sequence ID" value="BAC63332.1"/>
    <property type="molecule type" value="Genomic_DNA"/>
</dbReference>
<dbReference type="RefSeq" id="WP_011054987.1">
    <property type="nucleotide sequence ID" value="NC_004606.1"/>
</dbReference>
<dbReference type="SMR" id="P0CZ59"/>
<dbReference type="KEGG" id="sps:SPs0237"/>
<dbReference type="HOGENOM" id="CLU_040088_0_1_9"/>
<dbReference type="UniPathway" id="UPA00109">
    <property type="reaction ID" value="UER00183"/>
</dbReference>
<dbReference type="GO" id="GO:0004332">
    <property type="term" value="F:fructose-bisphosphate aldolase activity"/>
    <property type="evidence" value="ECO:0007669"/>
    <property type="project" value="UniProtKB-EC"/>
</dbReference>
<dbReference type="GO" id="GO:0008270">
    <property type="term" value="F:zinc ion binding"/>
    <property type="evidence" value="ECO:0007669"/>
    <property type="project" value="InterPro"/>
</dbReference>
<dbReference type="GO" id="GO:0030388">
    <property type="term" value="P:fructose 1,6-bisphosphate metabolic process"/>
    <property type="evidence" value="ECO:0007669"/>
    <property type="project" value="InterPro"/>
</dbReference>
<dbReference type="GO" id="GO:0006096">
    <property type="term" value="P:glycolytic process"/>
    <property type="evidence" value="ECO:0007669"/>
    <property type="project" value="UniProtKB-UniPathway"/>
</dbReference>
<dbReference type="CDD" id="cd00947">
    <property type="entry name" value="TBP_aldolase_IIB"/>
    <property type="match status" value="1"/>
</dbReference>
<dbReference type="FunFam" id="3.20.20.70:FF:000111">
    <property type="entry name" value="Fructose-1,6-bisphosphate aldolase"/>
    <property type="match status" value="1"/>
</dbReference>
<dbReference type="Gene3D" id="3.20.20.70">
    <property type="entry name" value="Aldolase class I"/>
    <property type="match status" value="1"/>
</dbReference>
<dbReference type="InterPro" id="IPR013785">
    <property type="entry name" value="Aldolase_TIM"/>
</dbReference>
<dbReference type="InterPro" id="IPR050246">
    <property type="entry name" value="Class_II_FBP_aldolase"/>
</dbReference>
<dbReference type="InterPro" id="IPR000771">
    <property type="entry name" value="FBA_II"/>
</dbReference>
<dbReference type="InterPro" id="IPR011289">
    <property type="entry name" value="Fruc_bis_ald_class-2"/>
</dbReference>
<dbReference type="NCBIfam" id="TIGR00167">
    <property type="entry name" value="cbbA"/>
    <property type="match status" value="1"/>
</dbReference>
<dbReference type="NCBIfam" id="TIGR01859">
    <property type="entry name" value="fruc_bis_ald"/>
    <property type="match status" value="1"/>
</dbReference>
<dbReference type="NCBIfam" id="NF005590">
    <property type="entry name" value="PRK07315.1"/>
    <property type="match status" value="1"/>
</dbReference>
<dbReference type="PANTHER" id="PTHR30304">
    <property type="entry name" value="D-TAGATOSE-1,6-BISPHOSPHATE ALDOLASE"/>
    <property type="match status" value="1"/>
</dbReference>
<dbReference type="PANTHER" id="PTHR30304:SF0">
    <property type="entry name" value="D-TAGATOSE-1,6-BISPHOSPHATE ALDOLASE SUBUNIT GATY-RELATED"/>
    <property type="match status" value="1"/>
</dbReference>
<dbReference type="Pfam" id="PF01116">
    <property type="entry name" value="F_bP_aldolase"/>
    <property type="match status" value="1"/>
</dbReference>
<dbReference type="PIRSF" id="PIRSF001359">
    <property type="entry name" value="F_bP_aldolase_II"/>
    <property type="match status" value="1"/>
</dbReference>
<dbReference type="SUPFAM" id="SSF51569">
    <property type="entry name" value="Aldolase"/>
    <property type="match status" value="1"/>
</dbReference>
<dbReference type="PROSITE" id="PS00602">
    <property type="entry name" value="ALDOLASE_CLASS_II_1"/>
    <property type="match status" value="1"/>
</dbReference>
<dbReference type="PROSITE" id="PS00806">
    <property type="entry name" value="ALDOLASE_CLASS_II_2"/>
    <property type="match status" value="1"/>
</dbReference>
<protein>
    <recommendedName>
        <fullName>Fructose-bisphosphate aldolase</fullName>
        <shortName>FBP aldolase</shortName>
        <shortName>FBPA</shortName>
        <ecNumber>4.1.2.13</ecNumber>
    </recommendedName>
    <alternativeName>
        <fullName>Fructose-1,6-bisphosphate aldolase</fullName>
    </alternativeName>
</protein>
<gene>
    <name type="primary">fba</name>
    <name type="ordered locus">SPs0237</name>
</gene>
<keyword id="KW-0324">Glycolysis</keyword>
<keyword id="KW-0456">Lyase</keyword>
<keyword id="KW-0479">Metal-binding</keyword>
<keyword id="KW-0862">Zinc</keyword>
<organism>
    <name type="scientific">Streptococcus pyogenes serotype M3 (strain SSI-1)</name>
    <dbReference type="NCBI Taxonomy" id="193567"/>
    <lineage>
        <taxon>Bacteria</taxon>
        <taxon>Bacillati</taxon>
        <taxon>Bacillota</taxon>
        <taxon>Bacilli</taxon>
        <taxon>Lactobacillales</taxon>
        <taxon>Streptococcaceae</taxon>
        <taxon>Streptococcus</taxon>
    </lineage>
</organism>
<reference key="1">
    <citation type="journal article" date="2003" name="Genome Res.">
        <title>Genome sequence of an M3 strain of Streptococcus pyogenes reveals a large-scale genomic rearrangement in invasive strains and new insights into phage evolution.</title>
        <authorList>
            <person name="Nakagawa I."/>
            <person name="Kurokawa K."/>
            <person name="Yamashita A."/>
            <person name="Nakata M."/>
            <person name="Tomiyasu Y."/>
            <person name="Okahashi N."/>
            <person name="Kawabata S."/>
            <person name="Yamazaki K."/>
            <person name="Shiba T."/>
            <person name="Yasunaga T."/>
            <person name="Hayashi H."/>
            <person name="Hattori M."/>
            <person name="Hamada S."/>
        </authorList>
    </citation>
    <scope>NUCLEOTIDE SEQUENCE [LARGE SCALE GENOMIC DNA]</scope>
    <source>
        <strain>SSI-1</strain>
    </source>
</reference>
<evidence type="ECO:0000250" key="1"/>
<evidence type="ECO:0000305" key="2"/>
<proteinExistence type="inferred from homology"/>